<feature type="chain" id="PRO_0000077233" description="Ribosomal protein uL3-like">
    <location>
        <begin position="1"/>
        <end position="407"/>
    </location>
</feature>
<feature type="region of interest" description="Disordered" evidence="2">
    <location>
        <begin position="1"/>
        <end position="35"/>
    </location>
</feature>
<feature type="region of interest" description="Disordered" evidence="2">
    <location>
        <begin position="387"/>
        <end position="407"/>
    </location>
</feature>
<feature type="compositionally biased region" description="Basic residues" evidence="2">
    <location>
        <begin position="1"/>
        <end position="31"/>
    </location>
</feature>
<feature type="sequence variant" id="VAR_085880" description="In CMD2D; uncertain significance; dbSNP:rs770344400." evidence="3 5">
    <original>G</original>
    <variation>D</variation>
    <location>
        <position position="27"/>
    </location>
</feature>
<feature type="sequence variant" id="VAR_087799" description="In CMD2D; uncertain significance." evidence="6">
    <original>A</original>
    <variation>T</variation>
    <location>
        <position position="51"/>
    </location>
</feature>
<feature type="sequence variant" id="VAR_085881" description="In CMD2D; uncertain significance; dbSNP:rs376654625." evidence="4">
    <original>R</original>
    <variation>H</variation>
    <location>
        <position position="116"/>
    </location>
</feature>
<feature type="sequence variant" id="VAR_085882" description="In CMD2D; uncertain significance; dbSNP:rs143544112." evidence="3">
    <original>R</original>
    <variation>W</variation>
    <location>
        <position position="161"/>
    </location>
</feature>
<feature type="sequence variant" id="VAR_085883" description="In CMD2D; uncertain significance; dbSNP:rs924125081." evidence="3">
    <original>T</original>
    <variation>M</variation>
    <location>
        <position position="189"/>
    </location>
</feature>
<feature type="sequence variant" id="VAR_087800" description="In CMD2D; uncertain significance." evidence="6">
    <original>V</original>
    <variation>F</variation>
    <location>
        <position position="231"/>
    </location>
</feature>
<feature type="sequence variant" id="VAR_034461" description="In dbSNP:rs34265469.">
    <original>P</original>
    <variation>L</variation>
    <location>
        <position position="291"/>
    </location>
</feature>
<feature type="sequence variant" id="VAR_085884" description="In CMD2D; uncertain significance; dbSNP:rs771732216." evidence="3">
    <original>D</original>
    <variation>N</variation>
    <location>
        <position position="308"/>
    </location>
</feature>
<feature type="sequence variant" id="VAR_085885" description="In CMD2D; uncertain significance." evidence="3">
    <original>D</original>
    <variation>V</variation>
    <location>
        <position position="308"/>
    </location>
</feature>
<feature type="sequence variant" id="VAR_085886" description="In CMD2D; uncertain significance; dbSNP:rs1465045317." evidence="3">
    <original>R</original>
    <variation>W</variation>
    <location>
        <position position="343"/>
    </location>
</feature>
<dbReference type="EMBL" id="U65581">
    <property type="protein sequence ID" value="AAC50777.1"/>
    <property type="molecule type" value="mRNA"/>
</dbReference>
<dbReference type="EMBL" id="AE006640">
    <property type="protein sequence ID" value="AAK61301.1"/>
    <property type="molecule type" value="Genomic_DNA"/>
</dbReference>
<dbReference type="EMBL" id="BC050413">
    <property type="protein sequence ID" value="AAH50413.1"/>
    <property type="molecule type" value="mRNA"/>
</dbReference>
<dbReference type="CCDS" id="CCDS10450.1"/>
<dbReference type="RefSeq" id="NP_005052.1">
    <property type="nucleotide sequence ID" value="NM_005061.3"/>
</dbReference>
<dbReference type="SMR" id="Q92901"/>
<dbReference type="BioGRID" id="112043">
    <property type="interactions" value="69"/>
</dbReference>
<dbReference type="ComplexPortal" id="CPX-7665">
    <property type="entry name" value="60S cytosolic large ribosomal subunit, striated muscle variant"/>
</dbReference>
<dbReference type="FunCoup" id="Q92901">
    <property type="interactions" value="314"/>
</dbReference>
<dbReference type="IntAct" id="Q92901">
    <property type="interactions" value="5"/>
</dbReference>
<dbReference type="STRING" id="9606.ENSP00000268661"/>
<dbReference type="iPTMnet" id="Q92901"/>
<dbReference type="PhosphoSitePlus" id="Q92901"/>
<dbReference type="SwissPalm" id="Q92901"/>
<dbReference type="BioMuta" id="RPL3L"/>
<dbReference type="DMDM" id="2500230"/>
<dbReference type="jPOST" id="Q92901"/>
<dbReference type="MassIVE" id="Q92901"/>
<dbReference type="PaxDb" id="9606-ENSP00000268661"/>
<dbReference type="PeptideAtlas" id="Q92901"/>
<dbReference type="ProteomicsDB" id="75583"/>
<dbReference type="Pumba" id="Q92901"/>
<dbReference type="Antibodypedia" id="23334">
    <property type="antibodies" value="67 antibodies from 22 providers"/>
</dbReference>
<dbReference type="DNASU" id="6123"/>
<dbReference type="Ensembl" id="ENST00000268661.8">
    <property type="protein sequence ID" value="ENSP00000268661.7"/>
    <property type="gene ID" value="ENSG00000140986.8"/>
</dbReference>
<dbReference type="Ensembl" id="ENST00000709230.1">
    <property type="protein sequence ID" value="ENSP00000517569.1"/>
    <property type="gene ID" value="ENSG00000291929.1"/>
</dbReference>
<dbReference type="GeneID" id="6123"/>
<dbReference type="KEGG" id="hsa:6123"/>
<dbReference type="MANE-Select" id="ENST00000268661.8">
    <property type="protein sequence ID" value="ENSP00000268661.7"/>
    <property type="RefSeq nucleotide sequence ID" value="NM_005061.3"/>
    <property type="RefSeq protein sequence ID" value="NP_005052.1"/>
</dbReference>
<dbReference type="UCSC" id="uc002cnh.4">
    <property type="organism name" value="human"/>
</dbReference>
<dbReference type="AGR" id="HGNC:10351"/>
<dbReference type="CTD" id="6123"/>
<dbReference type="DisGeNET" id="6123"/>
<dbReference type="GeneCards" id="RPL3L"/>
<dbReference type="HGNC" id="HGNC:10351">
    <property type="gene designation" value="RPL3L"/>
</dbReference>
<dbReference type="HPA" id="ENSG00000140986">
    <property type="expression patterns" value="Tissue enhanced (skeletal muscle, tongue)"/>
</dbReference>
<dbReference type="MalaCards" id="RPL3L"/>
<dbReference type="MIM" id="617416">
    <property type="type" value="gene"/>
</dbReference>
<dbReference type="MIM" id="619371">
    <property type="type" value="phenotype"/>
</dbReference>
<dbReference type="neXtProt" id="NX_Q92901"/>
<dbReference type="OpenTargets" id="ENSG00000140986"/>
<dbReference type="Orphanet" id="154">
    <property type="disease" value="Familial isolated dilated cardiomyopathy"/>
</dbReference>
<dbReference type="PharmGKB" id="PA34746"/>
<dbReference type="VEuPathDB" id="HostDB:ENSG00000140986"/>
<dbReference type="eggNOG" id="KOG0746">
    <property type="taxonomic scope" value="Eukaryota"/>
</dbReference>
<dbReference type="GeneTree" id="ENSGT00390000017606"/>
<dbReference type="HOGENOM" id="CLU_033361_1_0_1"/>
<dbReference type="InParanoid" id="Q92901"/>
<dbReference type="OMA" id="HVEDGKM"/>
<dbReference type="OrthoDB" id="1611972at2759"/>
<dbReference type="PAN-GO" id="Q92901">
    <property type="GO annotations" value="4 GO annotations based on evolutionary models"/>
</dbReference>
<dbReference type="PhylomeDB" id="Q92901"/>
<dbReference type="TreeFam" id="TF300555"/>
<dbReference type="PathwayCommons" id="Q92901"/>
<dbReference type="Reactome" id="R-HSA-156827">
    <property type="pathway name" value="L13a-mediated translational silencing of Ceruloplasmin expression"/>
</dbReference>
<dbReference type="Reactome" id="R-HSA-156902">
    <property type="pathway name" value="Peptide chain elongation"/>
</dbReference>
<dbReference type="Reactome" id="R-HSA-1799339">
    <property type="pathway name" value="SRP-dependent cotranslational protein targeting to membrane"/>
</dbReference>
<dbReference type="Reactome" id="R-HSA-192823">
    <property type="pathway name" value="Viral mRNA Translation"/>
</dbReference>
<dbReference type="Reactome" id="R-HSA-2408557">
    <property type="pathway name" value="Selenocysteine synthesis"/>
</dbReference>
<dbReference type="Reactome" id="R-HSA-6791226">
    <property type="pathway name" value="Major pathway of rRNA processing in the nucleolus and cytosol"/>
</dbReference>
<dbReference type="Reactome" id="R-HSA-72689">
    <property type="pathway name" value="Formation of a pool of free 40S subunits"/>
</dbReference>
<dbReference type="Reactome" id="R-HSA-72706">
    <property type="pathway name" value="GTP hydrolysis and joining of the 60S ribosomal subunit"/>
</dbReference>
<dbReference type="Reactome" id="R-HSA-72764">
    <property type="pathway name" value="Eukaryotic Translation Termination"/>
</dbReference>
<dbReference type="Reactome" id="R-HSA-9010553">
    <property type="pathway name" value="Regulation of expression of SLITs and ROBOs"/>
</dbReference>
<dbReference type="Reactome" id="R-HSA-9633012">
    <property type="pathway name" value="Response of EIF2AK4 (GCN2) to amino acid deficiency"/>
</dbReference>
<dbReference type="Reactome" id="R-HSA-975956">
    <property type="pathway name" value="Nonsense Mediated Decay (NMD) independent of the Exon Junction Complex (EJC)"/>
</dbReference>
<dbReference type="Reactome" id="R-HSA-975957">
    <property type="pathway name" value="Nonsense Mediated Decay (NMD) enhanced by the Exon Junction Complex (EJC)"/>
</dbReference>
<dbReference type="SignaLink" id="Q92901"/>
<dbReference type="SIGNOR" id="Q92901"/>
<dbReference type="BioGRID-ORCS" id="6123">
    <property type="hits" value="14 hits in 1155 CRISPR screens"/>
</dbReference>
<dbReference type="CD-CODE" id="232F8A39">
    <property type="entry name" value="P-body"/>
</dbReference>
<dbReference type="CD-CODE" id="DEE660B4">
    <property type="entry name" value="Stress granule"/>
</dbReference>
<dbReference type="GenomeRNAi" id="6123"/>
<dbReference type="Pharos" id="Q92901">
    <property type="development level" value="Tbio"/>
</dbReference>
<dbReference type="PRO" id="PR:Q92901"/>
<dbReference type="Proteomes" id="UP000005640">
    <property type="component" value="Chromosome 16"/>
</dbReference>
<dbReference type="RNAct" id="Q92901">
    <property type="molecule type" value="protein"/>
</dbReference>
<dbReference type="Bgee" id="ENSG00000140986">
    <property type="expression patterns" value="Expressed in skeletal muscle tissue of rectus abdominis and 105 other cell types or tissues"/>
</dbReference>
<dbReference type="ExpressionAtlas" id="Q92901">
    <property type="expression patterns" value="baseline and differential"/>
</dbReference>
<dbReference type="GO" id="GO:0022625">
    <property type="term" value="C:cytosolic large ribosomal subunit"/>
    <property type="evidence" value="ECO:0007005"/>
    <property type="project" value="UniProtKB"/>
</dbReference>
<dbReference type="GO" id="GO:0016020">
    <property type="term" value="C:membrane"/>
    <property type="evidence" value="ECO:0007005"/>
    <property type="project" value="UniProtKB"/>
</dbReference>
<dbReference type="GO" id="GO:0005840">
    <property type="term" value="C:ribosome"/>
    <property type="evidence" value="ECO:0000304"/>
    <property type="project" value="ProtInc"/>
</dbReference>
<dbReference type="GO" id="GO:0003723">
    <property type="term" value="F:RNA binding"/>
    <property type="evidence" value="ECO:0000318"/>
    <property type="project" value="GO_Central"/>
</dbReference>
<dbReference type="GO" id="GO:0003735">
    <property type="term" value="F:structural constituent of ribosome"/>
    <property type="evidence" value="ECO:0000318"/>
    <property type="project" value="GO_Central"/>
</dbReference>
<dbReference type="GO" id="GO:0010832">
    <property type="term" value="P:negative regulation of myotube differentiation"/>
    <property type="evidence" value="ECO:0007669"/>
    <property type="project" value="Ensembl"/>
</dbReference>
<dbReference type="GO" id="GO:0016202">
    <property type="term" value="P:regulation of striated muscle tissue development"/>
    <property type="evidence" value="ECO:0007669"/>
    <property type="project" value="Ensembl"/>
</dbReference>
<dbReference type="GO" id="GO:0006412">
    <property type="term" value="P:translation"/>
    <property type="evidence" value="ECO:0000318"/>
    <property type="project" value="GO_Central"/>
</dbReference>
<dbReference type="FunFam" id="2.40.30.10:FF:000079">
    <property type="entry name" value="60S ribosomal protein L3"/>
    <property type="match status" value="1"/>
</dbReference>
<dbReference type="FunFam" id="3.30.1430.10:FF:000001">
    <property type="entry name" value="60S ribosomal protein L3"/>
    <property type="match status" value="1"/>
</dbReference>
<dbReference type="FunFam" id="4.10.960.10:FF:000001">
    <property type="entry name" value="60S ribosomal protein L3"/>
    <property type="match status" value="1"/>
</dbReference>
<dbReference type="FunFam" id="4.10.960.10:FF:000002">
    <property type="entry name" value="60S ribosomal protein L3"/>
    <property type="match status" value="1"/>
</dbReference>
<dbReference type="FunFam" id="2.40.30.10:FF:000351">
    <property type="entry name" value="Ribosomal protein L3"/>
    <property type="match status" value="1"/>
</dbReference>
<dbReference type="Gene3D" id="3.30.1430.10">
    <property type="match status" value="1"/>
</dbReference>
<dbReference type="Gene3D" id="4.10.960.10">
    <property type="entry name" value="Ribosomal protein L3, domain 3"/>
    <property type="match status" value="1"/>
</dbReference>
<dbReference type="Gene3D" id="2.40.30.10">
    <property type="entry name" value="Translation factors"/>
    <property type="match status" value="1"/>
</dbReference>
<dbReference type="InterPro" id="IPR045077">
    <property type="entry name" value="L3_arc_euk"/>
</dbReference>
<dbReference type="InterPro" id="IPR044892">
    <property type="entry name" value="Ribosomal_L3_dom_3_arc_sf"/>
</dbReference>
<dbReference type="InterPro" id="IPR000597">
    <property type="entry name" value="Ribosomal_uL3"/>
</dbReference>
<dbReference type="InterPro" id="IPR019926">
    <property type="entry name" value="Ribosomal_uL3_CS"/>
</dbReference>
<dbReference type="InterPro" id="IPR009000">
    <property type="entry name" value="Transl_B-barrel_sf"/>
</dbReference>
<dbReference type="PANTHER" id="PTHR11363">
    <property type="entry name" value="60S RIBOSOMAL PROTEIN L3-RELATED"/>
    <property type="match status" value="1"/>
</dbReference>
<dbReference type="PANTHER" id="PTHR11363:SF7">
    <property type="entry name" value="RIBOSOMAL PROTEIN UL3-LIKE"/>
    <property type="match status" value="1"/>
</dbReference>
<dbReference type="Pfam" id="PF00297">
    <property type="entry name" value="Ribosomal_L3"/>
    <property type="match status" value="1"/>
</dbReference>
<dbReference type="SUPFAM" id="SSF50447">
    <property type="entry name" value="Translation proteins"/>
    <property type="match status" value="1"/>
</dbReference>
<dbReference type="PROSITE" id="PS00474">
    <property type="entry name" value="RIBOSOMAL_L3"/>
    <property type="match status" value="1"/>
</dbReference>
<organism>
    <name type="scientific">Homo sapiens</name>
    <name type="common">Human</name>
    <dbReference type="NCBI Taxonomy" id="9606"/>
    <lineage>
        <taxon>Eukaryota</taxon>
        <taxon>Metazoa</taxon>
        <taxon>Chordata</taxon>
        <taxon>Craniata</taxon>
        <taxon>Vertebrata</taxon>
        <taxon>Euteleostomi</taxon>
        <taxon>Mammalia</taxon>
        <taxon>Eutheria</taxon>
        <taxon>Euarchontoglires</taxon>
        <taxon>Primates</taxon>
        <taxon>Haplorrhini</taxon>
        <taxon>Catarrhini</taxon>
        <taxon>Hominidae</taxon>
        <taxon>Homo</taxon>
    </lineage>
</organism>
<name>RL3L_HUMAN</name>
<keyword id="KW-0122">Cardiomyopathy</keyword>
<keyword id="KW-0225">Disease variant</keyword>
<keyword id="KW-1267">Proteomics identification</keyword>
<keyword id="KW-1185">Reference proteome</keyword>
<keyword id="KW-0687">Ribonucleoprotein</keyword>
<keyword id="KW-0689">Ribosomal protein</keyword>
<accession>Q92901</accession>
<comment type="function">
    <text evidence="1">Heart- and skeletal muscle-specific component of the ribosome, which regulates muscle function. Component of the large ribosomal subunit in striated muscle cells: replaces the RPL3 paralog in the ribosome in these cells. The ribosome is a large ribonucleoprotein complex responsible for the synthesis of proteins in the cell. Inhibits myotube growth and muscle function.</text>
</comment>
<comment type="subunit">
    <text evidence="1">Component of the large ribosomal subunit in striated muscle cells.</text>
</comment>
<comment type="disease" evidence="3 4 5 6">
    <disease id="DI-06135">
        <name>Cardiomyopathy, dilated, 2D</name>
        <acronym>CMD2D</acronym>
        <description>A form of dilated cardiomyopathy, a disorder characterized by ventricular dilation and impaired systolic function, resulting in congestive heart failure and arrhythmia. Patients are at risk of premature death. CMD2D is an autosomal recessive, severe form with neonatal onset.</description>
        <dbReference type="MIM" id="619371"/>
    </disease>
    <text>The disease may be caused by variants affecting the gene represented in this entry.</text>
</comment>
<comment type="similarity">
    <text evidence="8">Belongs to the universal ribosomal protein uL3 family.</text>
</comment>
<reference key="1">
    <citation type="journal article" date="1996" name="Genomics">
        <title>A novel ribosomal protein L3-like gene (RPL3L) maps to the autosomal dominant polycystic kidney disease gene region.</title>
        <authorList>
            <person name="van Raay T.J."/>
            <person name="Connors T.D."/>
            <person name="Klinger K.W."/>
            <person name="Landes G.M."/>
            <person name="Burn T.C."/>
        </authorList>
    </citation>
    <scope>NUCLEOTIDE SEQUENCE [MRNA]</scope>
    <source>
        <tissue>Heart muscle</tissue>
    </source>
</reference>
<reference key="2">
    <citation type="journal article" date="2001" name="Hum. Mol. Genet.">
        <title>Sequence, structure and pathology of the fully annotated terminal 2 Mb of the short arm of human chromosome 16.</title>
        <authorList>
            <person name="Daniels R.J."/>
            <person name="Peden J.F."/>
            <person name="Lloyd C."/>
            <person name="Horsley S.W."/>
            <person name="Clark K."/>
            <person name="Tufarelli C."/>
            <person name="Kearney L."/>
            <person name="Buckle V.J."/>
            <person name="Doggett N.A."/>
            <person name="Flint J."/>
            <person name="Higgs D.R."/>
        </authorList>
    </citation>
    <scope>NUCLEOTIDE SEQUENCE [LARGE SCALE GENOMIC DNA]</scope>
</reference>
<reference key="3">
    <citation type="journal article" date="2004" name="Genome Res.">
        <title>The status, quality, and expansion of the NIH full-length cDNA project: the Mammalian Gene Collection (MGC).</title>
        <authorList>
            <consortium name="The MGC Project Team"/>
        </authorList>
    </citation>
    <scope>NUCLEOTIDE SEQUENCE [LARGE SCALE MRNA]</scope>
    <source>
        <tissue>PNS</tissue>
    </source>
</reference>
<reference key="4">
    <citation type="journal article" date="2020" name="Circ. Genom. Precis. Med.">
        <title>Categorized genetic analysis in childhood-onset cardiomyopathy.</title>
        <authorList>
            <person name="Al-Hassnan Z.N."/>
            <person name="Almesned A."/>
            <person name="Tulbah S."/>
            <person name="Alakhfash A."/>
            <person name="Alhadeq F."/>
            <person name="Alruwaili N."/>
            <person name="Alkorashy M."/>
            <person name="Alhashem A."/>
            <person name="Alrashdan A."/>
            <person name="Faqeih E."/>
            <person name="Alkhalifi S.M."/>
            <person name="Al Humaidi Z."/>
            <person name="Sogaty S."/>
            <person name="Azhari N."/>
            <person name="Bakhaider A.M."/>
            <person name="Al Asmari A."/>
            <person name="Awaji A."/>
            <person name="Albash B."/>
            <person name="Alhabdan M."/>
            <person name="Alghamdi M.A."/>
            <person name="Alshuaibi W."/>
            <person name="Al-Hassnan R.Z."/>
            <person name="Alshenqiti A."/>
            <person name="Alqahtani A."/>
            <person name="Shinwari Z."/>
            <person name="Rbabeh M."/>
            <person name="Takroni S."/>
            <person name="Alomrani A."/>
            <person name="Albert Brotons D.C."/>
            <person name="Alqwaee A.M."/>
            <person name="Almanea W."/>
            <person name="Alfadley F.A."/>
            <person name="Alfayyadh M."/>
            <person name="Alwadai A."/>
        </authorList>
    </citation>
    <scope>VARIANT CMD2D HIS-116</scope>
    <scope>INVOLVEMENT IN CMD2D</scope>
</reference>
<reference key="5">
    <citation type="journal article" date="2020" name="Hum. Genet.">
        <title>Bi-allelic missense disease-causing variants in RPL3L associate neonatal dilated cardiomyopathy with muscle-specific ribosome biogenesis.</title>
        <authorList>
            <person name="Ganapathi M."/>
            <person name="Argyriou L."/>
            <person name="Martinez-Azorin F."/>
            <person name="Morlot S."/>
            <person name="Yigit G."/>
            <person name="Lee T.M."/>
            <person name="Auber B."/>
            <person name="von Gise A."/>
            <person name="Petrey D.S."/>
            <person name="Thiele H."/>
            <person name="Cyganek L."/>
            <person name="Sabater-Molina M."/>
            <person name="Ahimaz P."/>
            <person name="Cabezas-Herrera J."/>
            <person name="Sorli-Garcia M."/>
            <person name="Zibat A."/>
            <person name="Siegelin M.D."/>
            <person name="Burfeind P."/>
            <person name="Buchovecky C.M."/>
            <person name="Hasenfuss G."/>
            <person name="Honig B."/>
            <person name="Li Y."/>
            <person name="Iglesias A.D."/>
            <person name="Wollnik B."/>
        </authorList>
    </citation>
    <scope>VARIANTS CMD2D ASP-27; TRP-161; MET-189; ASN-308; VAL-308 AND TRP-343</scope>
    <scope>INVOLVEMENT IN CMD2D</scope>
</reference>
<reference key="6">
    <citation type="journal article" date="2022" name="Children (Basel)">
        <title>Compound heterozygous missense variants in RPL3L genes associated with severe forms of dilated cardiomyopathy: a case report and literature review.</title>
        <authorList>
            <person name="Das B.B."/>
            <person name="Gajula V."/>
            <person name="Arya S."/>
            <person name="Taylor M.B."/>
        </authorList>
    </citation>
    <scope>VARIANTS CMD2D THR-51 AND PHE-231</scope>
</reference>
<reference key="7">
    <citation type="journal article" date="2022" name="J. Cardiovasc. Dev. Dis.">
        <title>Further evidence of autosomal recessive inheritance of RPL3L pathogenic variants with rapidly progressive neonatal dilated cardiomyopathy.</title>
        <authorList>
            <person name="Nannapaneni H."/>
            <person name="Ghaleb S."/>
            <person name="Arya S."/>
            <person name="Gajula V."/>
            <person name="Taylor M.B."/>
            <person name="Das B.B."/>
        </authorList>
    </citation>
    <scope>VARIANT CMD2D ASP-27</scope>
</reference>
<proteinExistence type="evidence at protein level"/>
<gene>
    <name evidence="7 9" type="primary">RPL3L</name>
</gene>
<protein>
    <recommendedName>
        <fullName evidence="8">Ribosomal protein uL3-like</fullName>
    </recommendedName>
    <alternativeName>
        <fullName evidence="7">60S ribosomal protein L3-like</fullName>
    </alternativeName>
    <alternativeName>
        <fullName>Large ribosomal subunit protein uL3-like</fullName>
    </alternativeName>
</protein>
<sequence>MSHRKFSAPRHGHLGFLPHKRSHRHRGKVKTWPRDDPSQPVHLTAFLGYKAGMTHTLREVHRPGLKISKREEVEAVTIVETPPLVVVGVVGYVATPRGLRSFKTIFAEHLSDECRRRFYKDWHKSKKKAFTKACKRWRDTDGKKQLQKDFAAMKKYCKVIRVIVHTQMKLLPFRQKKAHIMEIQLNGGTVAEKVAWAQARLEKQVPVHSVFSQSEVIDVIAVTKGRGVKGVTSRWHTKKLPRKTHKGLRKVACIGAWHPARVGCSIARAGQKGYHHRTELNKKIFRIGRGPHMEDGKLVKNNASTSYDVTAKSITPLGGFPHYGEVNNDFVMLKGCIAGTKKRVITLRKSLLVHHSRQAVENIELKFIDTTSKFGHGRFQTAQEKRAFMGPQKKHLEKETPETSGDL</sequence>
<evidence type="ECO:0000250" key="1">
    <source>
        <dbReference type="UniProtKB" id="E9PWZ3"/>
    </source>
</evidence>
<evidence type="ECO:0000256" key="2">
    <source>
        <dbReference type="SAM" id="MobiDB-lite"/>
    </source>
</evidence>
<evidence type="ECO:0000269" key="3">
    <source>
    </source>
</evidence>
<evidence type="ECO:0000269" key="4">
    <source>
    </source>
</evidence>
<evidence type="ECO:0000269" key="5">
    <source>
    </source>
</evidence>
<evidence type="ECO:0000269" key="6">
    <source>
    </source>
</evidence>
<evidence type="ECO:0000303" key="7">
    <source>
    </source>
</evidence>
<evidence type="ECO:0000305" key="8"/>
<evidence type="ECO:0000312" key="9">
    <source>
        <dbReference type="HGNC" id="HGNC:10351"/>
    </source>
</evidence>